<gene>
    <name evidence="1" type="primary">L3</name>
</gene>
<sequence length="940" mass="105501">MATPSMMPQWAYMHIAGQDASEYLSPGLVQFARATDTYFSMGNKFRNPTVAPTHDVTTDRSQRLMLRFVPVDREDNTYSYKVRYTLAVGDNRVLDMASTFFDIRGVLDRGPSFKPYSGTAYNSLAPKGAPNTCQWKDSDSKMHTFGVAAMPGVTGKKIEADGLPIGIDSTSGTDTVIYADKTFQPEPQVGNASWVDANGTEEKYGGRALKDTTKMKPCYGSFAKPTNKEGGQANLKDSETAATTPNYDIDLAFFDNKNIAANYDPDIVMYTENVDLQTPDTHIVYKPGTEDTSSESNLGQQAMPNRPNYIGFRDNFIGLMYYNSTGNMGVLAGQASQLNAVVDLQDRNTELSYQLLLDSLGDRTRYFSMWNQAVDSYDPDVRIIENHGVEDELPNYCFPLNGVGFTDTYQGVKVKTDAVAGTSGTQWDKDDTTVSTANEIHGGNPFAMEINIQANLWRSFLYSNVALYLPDSYKYTPSNVTLPENKNTYDYMNGRVVPPSLVDTYVNIGARWSLDAMDNVNPFNHHRNAGLRYRSMLLGNGRYVPFHIQVPQKFFAVKNLLLLPGSYTYVWNFRKDVNMVLQSSLGNDLRVDGATISFTSINLYATFFPMAHNTASTLEAMLRNDTNDQSFNDYLSAANMLYPIPANATNIPISIPSRNWAAFRGWSFTRLKTKETPSLGSGFDPYFVYSGSIPYLDGTFYLNHTFKKVSIMFDSSVSWPGNDRLLSPNEFEIKRTVDGEGYNVAQCNMTKDWFLVQMLANYNIGYQGFYIPEGYKDRMYSFFRNFQPMSRQVVDEVNYTDYKAVTLPYQHNNSGFVGYLAPTMRQGEPYPANYPYPLIGTTAVKSVTQKKFLCDRTMWRIPFSSNFMSMGALTDLGQNLLYANSAHALDMTFEVDPMDEPTLLSLVFEVFDVVRVHQPHRGVIEAVYLRTPFSAGNATT</sequence>
<dbReference type="EMBL" id="X74662">
    <property type="protein sequence ID" value="CAA52726.1"/>
    <property type="molecule type" value="Genomic_DNA"/>
</dbReference>
<dbReference type="PIR" id="S37216">
    <property type="entry name" value="S37216"/>
</dbReference>
<dbReference type="SMR" id="P36854"/>
<dbReference type="GO" id="GO:0043657">
    <property type="term" value="C:host cell"/>
    <property type="evidence" value="ECO:0007669"/>
    <property type="project" value="GOC"/>
</dbReference>
<dbReference type="GO" id="GO:0042025">
    <property type="term" value="C:host cell nucleus"/>
    <property type="evidence" value="ECO:0007669"/>
    <property type="project" value="UniProtKB-SubCell"/>
</dbReference>
<dbReference type="GO" id="GO:0039623">
    <property type="term" value="C:T=25 icosahedral viral capsid"/>
    <property type="evidence" value="ECO:0007669"/>
    <property type="project" value="UniProtKB-UniRule"/>
</dbReference>
<dbReference type="GO" id="GO:0005198">
    <property type="term" value="F:structural molecule activity"/>
    <property type="evidence" value="ECO:0007669"/>
    <property type="project" value="UniProtKB-UniRule"/>
</dbReference>
<dbReference type="GO" id="GO:0075521">
    <property type="term" value="P:microtubule-dependent intracellular transport of viral material towards nucleus"/>
    <property type="evidence" value="ECO:0007669"/>
    <property type="project" value="UniProtKB-UniRule"/>
</dbReference>
<dbReference type="GO" id="GO:0046718">
    <property type="term" value="P:symbiont entry into host cell"/>
    <property type="evidence" value="ECO:0007669"/>
    <property type="project" value="UniProtKB-UniRule"/>
</dbReference>
<dbReference type="Gene3D" id="2.70.9.10">
    <property type="entry name" value="Adenovirus Type 2 Hexon, domain 4"/>
    <property type="match status" value="2"/>
</dbReference>
<dbReference type="Gene3D" id="3.90.39.10">
    <property type="entry name" value="Hexon Major Viral Coat Protein, domain 2"/>
    <property type="match status" value="1"/>
</dbReference>
<dbReference type="Gene3D" id="3.90.249.10">
    <property type="entry name" value="Hexon Major Viral Coat Protein, domain 3"/>
    <property type="match status" value="2"/>
</dbReference>
<dbReference type="HAMAP" id="MF_04051">
    <property type="entry name" value="ADV_CAPSH"/>
    <property type="match status" value="1"/>
</dbReference>
<dbReference type="InterPro" id="IPR016108">
    <property type="entry name" value="Adenovirus_Pll_hexon_C"/>
</dbReference>
<dbReference type="InterPro" id="IPR016107">
    <property type="entry name" value="Adenovirus_Pll_hexon_N"/>
</dbReference>
<dbReference type="InterPro" id="IPR044942">
    <property type="entry name" value="Adenovirus_Pll_hexon_sub2"/>
</dbReference>
<dbReference type="InterPro" id="IPR016110">
    <property type="entry name" value="Adenovirus_Pll_hexon_sub3"/>
</dbReference>
<dbReference type="InterPro" id="IPR037542">
    <property type="entry name" value="ADV_hexon"/>
</dbReference>
<dbReference type="InterPro" id="IPR016112">
    <property type="entry name" value="VP_dsDNA_II"/>
</dbReference>
<dbReference type="Pfam" id="PF01065">
    <property type="entry name" value="Adeno_hexon"/>
    <property type="match status" value="1"/>
</dbReference>
<dbReference type="Pfam" id="PF03678">
    <property type="entry name" value="Adeno_hexon_C"/>
    <property type="match status" value="1"/>
</dbReference>
<dbReference type="SUPFAM" id="SSF49749">
    <property type="entry name" value="Group II dsDNA viruses VP"/>
    <property type="match status" value="2"/>
</dbReference>
<feature type="initiator methionine" description="Removed; by host" evidence="1">
    <location>
        <position position="1"/>
    </location>
</feature>
<feature type="chain" id="PRO_0000221822" description="Hexon protein" evidence="1">
    <location>
        <begin position="2"/>
        <end position="940"/>
    </location>
</feature>
<feature type="site" description="Involved in interaction with pre-protein VI" evidence="1">
    <location>
        <position position="765"/>
    </location>
</feature>
<feature type="modified residue" description="N-acetylalanine; by host" evidence="1">
    <location>
        <position position="2"/>
    </location>
</feature>
<feature type="modified residue" description="Phosphotyrosine; by host" evidence="1">
    <location>
        <position position="928"/>
    </location>
</feature>
<protein>
    <recommendedName>
        <fullName evidence="1">Hexon protein</fullName>
        <shortName evidence="1">CP-H</shortName>
    </recommendedName>
    <alternativeName>
        <fullName evidence="1">Protein II</fullName>
    </alternativeName>
</protein>
<evidence type="ECO:0000255" key="1">
    <source>
        <dbReference type="HAMAP-Rule" id="MF_04051"/>
    </source>
</evidence>
<evidence type="ECO:0000305" key="2"/>
<comment type="function">
    <text evidence="1">Major capsid protein that self-associates to form 240 hexon trimers, each in the shape of a hexagon, building most of the pseudo T=25 capsid. Assembled into trimeric units with the help of the chaperone shutoff protein. Transported by pre-protein VI to the nucleus where it associates with other structural proteins to form an empty capsid. Might be involved, through its interaction with host dyneins, in the intracellular microtubule-dependent transport of incoming viral capsid to the nucleus.</text>
</comment>
<comment type="subunit">
    <text evidence="1">Homotrimer. Interacts with the capsid vertex protein; this interaction binds the peripentonal hexons to the neighboring penton base. Interacts with the hexon-linking protein; this interaction tethers the hexons surrounding the penton to those situated in the central plate of the facet. Interacts with the hexon-interlacing protein; this interaction lashes the hexons together. Interacts with host dyneins DYNC1LI1 and DYNC1I2; this interaction might be involved in intracellular microtubule-dependent transport of incoming viral capsid. Interacts with the shutoff protein; this interaction allows folding and formation of hexons trimers. Interacts with pre-protein VI; this interaction probably allows nuclear import of hexon trimers and possibly pre-capsid assembly.</text>
</comment>
<comment type="subcellular location">
    <subcellularLocation>
        <location evidence="1">Virion</location>
    </subcellularLocation>
    <subcellularLocation>
        <location evidence="1">Host nucleus</location>
    </subcellularLocation>
    <text evidence="1">Forms the capsid icosahedric shell. Present in 720 copies per virion, assembled in 240 trimers.</text>
</comment>
<comment type="induction">
    <text evidence="1">Expressed in the late phase of the viral replicative cycle.</text>
</comment>
<comment type="miscellaneous">
    <text evidence="1">All late proteins expressed from the major late promoter are produced by alternative splicing and alternative polyadenylation of the same gene giving rise to non-overlapping ORFs. A leader sequence is present in the N-terminus of all these mRNAs and is recognized by the viral shutoff protein to provide expression although conventional translation via ribosome scanning from the cap has been shut off in the host cell.</text>
</comment>
<comment type="similarity">
    <text evidence="1 2">Belongs to the adenoviridae hexon protein family.</text>
</comment>
<name>CAPSH_ADE16</name>
<keyword id="KW-0007">Acetylation</keyword>
<keyword id="KW-0167">Capsid protein</keyword>
<keyword id="KW-1176">Cytoplasmic inwards viral transport</keyword>
<keyword id="KW-1048">Host nucleus</keyword>
<keyword id="KW-0945">Host-virus interaction</keyword>
<keyword id="KW-0426">Late protein</keyword>
<keyword id="KW-1177">Microtubular inwards viral transport</keyword>
<keyword id="KW-0597">Phosphoprotein</keyword>
<keyword id="KW-1148">T=25 icosahedral capsid protein</keyword>
<keyword id="KW-0946">Virion</keyword>
<keyword id="KW-1160">Virus entry into host cell</keyword>
<accession>P36854</accession>
<organismHost>
    <name type="scientific">Homo sapiens</name>
    <name type="common">Human</name>
    <dbReference type="NCBI Taxonomy" id="9606"/>
</organismHost>
<organism>
    <name type="scientific">Human adenovirus B serotype 16</name>
    <name type="common">HAdV-16</name>
    <name type="synonym">Human adenovirus 16</name>
    <dbReference type="NCBI Taxonomy" id="31544"/>
    <lineage>
        <taxon>Viruses</taxon>
        <taxon>Varidnaviria</taxon>
        <taxon>Bamfordvirae</taxon>
        <taxon>Preplasmiviricota</taxon>
        <taxon>Tectiliviricetes</taxon>
        <taxon>Rowavirales</taxon>
        <taxon>Adenoviridae</taxon>
        <taxon>Mastadenovirus</taxon>
        <taxon>Human mastadenovirus B</taxon>
    </lineage>
</organism>
<proteinExistence type="inferred from homology"/>
<reference key="1">
    <citation type="journal article" date="1995" name="Virology">
        <title>Sequence characterization and comparison of human adenovirus subgenus B and E hexons.</title>
        <authorList>
            <person name="Pring-Akerblom P."/>
            <person name="Trijssenaar J."/>
            <person name="Adrian T."/>
        </authorList>
    </citation>
    <scope>NUCLEOTIDE SEQUENCE [GENOMIC DNA]</scope>
    <source>
        <strain>Isolate CH.79</strain>
    </source>
</reference>